<protein>
    <recommendedName>
        <fullName evidence="1">Probable [Fe-S]-dependent transcriptional repressor</fullName>
    </recommendedName>
</protein>
<gene>
    <name evidence="1" type="primary">feoC</name>
    <name type="ordered locus">ECH74115_4717</name>
</gene>
<reference key="1">
    <citation type="journal article" date="2011" name="Proc. Natl. Acad. Sci. U.S.A.">
        <title>Genomic anatomy of Escherichia coli O157:H7 outbreaks.</title>
        <authorList>
            <person name="Eppinger M."/>
            <person name="Mammel M.K."/>
            <person name="Leclerc J.E."/>
            <person name="Ravel J."/>
            <person name="Cebula T.A."/>
        </authorList>
    </citation>
    <scope>NUCLEOTIDE SEQUENCE [LARGE SCALE GENOMIC DNA]</scope>
    <source>
        <strain>EC4115 / EHEC</strain>
    </source>
</reference>
<proteinExistence type="inferred from homology"/>
<organism>
    <name type="scientific">Escherichia coli O157:H7 (strain EC4115 / EHEC)</name>
    <dbReference type="NCBI Taxonomy" id="444450"/>
    <lineage>
        <taxon>Bacteria</taxon>
        <taxon>Pseudomonadati</taxon>
        <taxon>Pseudomonadota</taxon>
        <taxon>Gammaproteobacteria</taxon>
        <taxon>Enterobacterales</taxon>
        <taxon>Enterobacteriaceae</taxon>
        <taxon>Escherichia</taxon>
    </lineage>
</organism>
<feature type="chain" id="PRO_1000201322" description="Probable [Fe-S]-dependent transcriptional repressor">
    <location>
        <begin position="1"/>
        <end position="78"/>
    </location>
</feature>
<feature type="binding site" evidence="1">
    <location>
        <position position="56"/>
    </location>
    <ligand>
        <name>iron-sulfur cluster</name>
        <dbReference type="ChEBI" id="CHEBI:30408"/>
    </ligand>
</feature>
<feature type="binding site" evidence="1">
    <location>
        <position position="61"/>
    </location>
    <ligand>
        <name>iron-sulfur cluster</name>
        <dbReference type="ChEBI" id="CHEBI:30408"/>
    </ligand>
</feature>
<feature type="binding site" evidence="1">
    <location>
        <position position="64"/>
    </location>
    <ligand>
        <name>iron-sulfur cluster</name>
        <dbReference type="ChEBI" id="CHEBI:30408"/>
    </ligand>
</feature>
<feature type="binding site" evidence="1">
    <location>
        <position position="70"/>
    </location>
    <ligand>
        <name>iron-sulfur cluster</name>
        <dbReference type="ChEBI" id="CHEBI:30408"/>
    </ligand>
</feature>
<evidence type="ECO:0000255" key="1">
    <source>
        <dbReference type="HAMAP-Rule" id="MF_01586"/>
    </source>
</evidence>
<sequence>MASLIQVRDLLALRGRMEAAQISQTLNTPQPMINAMLQQLESMGKAVRIQEEPDGCLSGSCKSCPEGKACLREWWALR</sequence>
<name>FEOC_ECO5E</name>
<dbReference type="EMBL" id="CP001164">
    <property type="protein sequence ID" value="ACI35029.1"/>
    <property type="molecule type" value="Genomic_DNA"/>
</dbReference>
<dbReference type="RefSeq" id="WP_000157586.1">
    <property type="nucleotide sequence ID" value="NC_011353.1"/>
</dbReference>
<dbReference type="SMR" id="B5YTW1"/>
<dbReference type="GeneID" id="86948257"/>
<dbReference type="KEGG" id="ecf:ECH74115_4717"/>
<dbReference type="HOGENOM" id="CLU_189182_0_0_6"/>
<dbReference type="GO" id="GO:0003677">
    <property type="term" value="F:DNA binding"/>
    <property type="evidence" value="ECO:0007669"/>
    <property type="project" value="UniProtKB-KW"/>
</dbReference>
<dbReference type="GO" id="GO:0005506">
    <property type="term" value="F:iron ion binding"/>
    <property type="evidence" value="ECO:0007669"/>
    <property type="project" value="UniProtKB-UniRule"/>
</dbReference>
<dbReference type="GO" id="GO:0051536">
    <property type="term" value="F:iron-sulfur cluster binding"/>
    <property type="evidence" value="ECO:0007669"/>
    <property type="project" value="UniProtKB-KW"/>
</dbReference>
<dbReference type="Gene3D" id="1.10.10.10">
    <property type="entry name" value="Winged helix-like DNA-binding domain superfamily/Winged helix DNA-binding domain"/>
    <property type="match status" value="1"/>
</dbReference>
<dbReference type="HAMAP" id="MF_01586">
    <property type="entry name" value="FeoC"/>
    <property type="match status" value="1"/>
</dbReference>
<dbReference type="InterPro" id="IPR023732">
    <property type="entry name" value="FeoC"/>
</dbReference>
<dbReference type="InterPro" id="IPR015102">
    <property type="entry name" value="Tscrpt_reg_HTH_FeoC"/>
</dbReference>
<dbReference type="InterPro" id="IPR036388">
    <property type="entry name" value="WH-like_DNA-bd_sf"/>
</dbReference>
<dbReference type="InterPro" id="IPR036390">
    <property type="entry name" value="WH_DNA-bd_sf"/>
</dbReference>
<dbReference type="NCBIfam" id="NF011960">
    <property type="entry name" value="PRK15431.1"/>
    <property type="match status" value="1"/>
</dbReference>
<dbReference type="Pfam" id="PF09012">
    <property type="entry name" value="FeoC"/>
    <property type="match status" value="1"/>
</dbReference>
<dbReference type="SUPFAM" id="SSF46785">
    <property type="entry name" value="Winged helix' DNA-binding domain"/>
    <property type="match status" value="1"/>
</dbReference>
<comment type="function">
    <text evidence="1">May function as a transcriptional regulator that controls feoABC expression.</text>
</comment>
<comment type="similarity">
    <text evidence="1">Belongs to the FeoC family.</text>
</comment>
<keyword id="KW-0238">DNA-binding</keyword>
<keyword id="KW-0408">Iron</keyword>
<keyword id="KW-0411">Iron-sulfur</keyword>
<keyword id="KW-0479">Metal-binding</keyword>
<keyword id="KW-0678">Repressor</keyword>
<keyword id="KW-0804">Transcription</keyword>
<keyword id="KW-0805">Transcription regulation</keyword>
<accession>B5YTW1</accession>